<keyword id="KW-0244">Early protein</keyword>
<sequence>MEDETELCFRSNKVTRLEMFVCTYGGKISSLACSHMELIKLLQIAEPVKALNCNFGHQCLPGYESLIKTPKKSKNMLRRPRKTEGDGTCFNSAIEASILFKDKMYKLKCFPSTGEIQVPGVIFPDFEDGKNIIQQWVEFLQHQPIEKKVQIIEFKTIMINFKFQINSVSPRVIIHLKKFAALLEQIPTPYPIREIKPPLEDSKVSAKFMVSPGKKVRINVFLKGKINILGCNTKESAETIYAFLKDLISVHWQEILCVLPVPD</sequence>
<name>TBP_ASFK5</name>
<protein>
    <recommendedName>
        <fullName evidence="1">Putative TATA-binding protein pB263R</fullName>
        <shortName evidence="1">TBP</shortName>
    </recommendedName>
</protein>
<accession>P0CAC1</accession>
<organism>
    <name type="scientific">African swine fever virus (isolate Pig/Kenya/KEN-50/1950)</name>
    <name type="common">ASFV</name>
    <dbReference type="NCBI Taxonomy" id="561445"/>
    <lineage>
        <taxon>Viruses</taxon>
        <taxon>Varidnaviria</taxon>
        <taxon>Bamfordvirae</taxon>
        <taxon>Nucleocytoviricota</taxon>
        <taxon>Pokkesviricetes</taxon>
        <taxon>Asfuvirales</taxon>
        <taxon>Asfarviridae</taxon>
        <taxon>Asfivirus</taxon>
        <taxon>African swine fever virus</taxon>
    </lineage>
</organism>
<reference key="1">
    <citation type="submission" date="2003-03" db="EMBL/GenBank/DDBJ databases">
        <title>African swine fever virus genomes.</title>
        <authorList>
            <person name="Kutish G.F."/>
            <person name="Rock D.L."/>
        </authorList>
    </citation>
    <scope>NUCLEOTIDE SEQUENCE [LARGE SCALE GENOMIC DNA]</scope>
</reference>
<comment type="function">
    <text evidence="1">Putative TATA-binding protein.</text>
</comment>
<comment type="induction">
    <text evidence="2">Expressed in the early phase of the viral replicative cycle.</text>
</comment>
<comment type="domain">
    <text evidence="1">Possibly contains a TATA-binding domain.</text>
</comment>
<comment type="similarity">
    <text evidence="2">Belongs to the asfivirus B263R family.</text>
</comment>
<dbReference type="EMBL" id="AY261360">
    <property type="status" value="NOT_ANNOTATED_CDS"/>
    <property type="molecule type" value="Genomic_DNA"/>
</dbReference>
<dbReference type="SMR" id="P0CAC1"/>
<dbReference type="Proteomes" id="UP000000861">
    <property type="component" value="Segment"/>
</dbReference>
<feature type="chain" id="PRO_0000373620" description="Putative TATA-binding protein pB263R">
    <location>
        <begin position="1"/>
        <end position="263"/>
    </location>
</feature>
<proteinExistence type="inferred from homology"/>
<evidence type="ECO:0000250" key="1">
    <source>
        <dbReference type="UniProtKB" id="Q65175"/>
    </source>
</evidence>
<evidence type="ECO:0000305" key="2"/>
<organismHost>
    <name type="scientific">Ornithodoros</name>
    <name type="common">relapsing fever ticks</name>
    <dbReference type="NCBI Taxonomy" id="6937"/>
</organismHost>
<organismHost>
    <name type="scientific">Phacochoerus aethiopicus</name>
    <name type="common">Warthog</name>
    <dbReference type="NCBI Taxonomy" id="85517"/>
</organismHost>
<organismHost>
    <name type="scientific">Phacochoerus africanus</name>
    <name type="common">Warthog</name>
    <dbReference type="NCBI Taxonomy" id="41426"/>
</organismHost>
<organismHost>
    <name type="scientific">Potamochoerus larvatus</name>
    <name type="common">Bushpig</name>
    <dbReference type="NCBI Taxonomy" id="273792"/>
</organismHost>
<organismHost>
    <name type="scientific">Sus scrofa</name>
    <name type="common">Pig</name>
    <dbReference type="NCBI Taxonomy" id="9823"/>
</organismHost>
<gene>
    <name type="ordered locus">Ken-098</name>
</gene>